<keyword id="KW-0064">Aspartyl protease</keyword>
<keyword id="KW-0997">Cell inner membrane</keyword>
<keyword id="KW-1003">Cell membrane</keyword>
<keyword id="KW-0378">Hydrolase</keyword>
<keyword id="KW-0472">Membrane</keyword>
<keyword id="KW-0645">Protease</keyword>
<keyword id="KW-0812">Transmembrane</keyword>
<keyword id="KW-1133">Transmembrane helix</keyword>
<accession>A6WKD5</accession>
<comment type="function">
    <text evidence="1">This protein specifically catalyzes the removal of signal peptides from prolipoproteins.</text>
</comment>
<comment type="catalytic activity">
    <reaction evidence="1">
        <text>Release of signal peptides from bacterial membrane prolipoproteins. Hydrolyzes -Xaa-Yaa-Zaa-|-(S,diacylglyceryl)Cys-, in which Xaa is hydrophobic (preferably Leu), and Yaa (Ala or Ser) and Zaa (Gly or Ala) have small, neutral side chains.</text>
        <dbReference type="EC" id="3.4.23.36"/>
    </reaction>
</comment>
<comment type="pathway">
    <text evidence="1">Protein modification; lipoprotein biosynthesis (signal peptide cleavage).</text>
</comment>
<comment type="subcellular location">
    <subcellularLocation>
        <location evidence="1">Cell inner membrane</location>
        <topology evidence="1">Multi-pass membrane protein</topology>
    </subcellularLocation>
</comment>
<comment type="similarity">
    <text evidence="1">Belongs to the peptidase A8 family.</text>
</comment>
<proteinExistence type="inferred from homology"/>
<feature type="chain" id="PRO_1000038823" description="Lipoprotein signal peptidase">
    <location>
        <begin position="1"/>
        <end position="171"/>
    </location>
</feature>
<feature type="transmembrane region" description="Helical" evidence="1">
    <location>
        <begin position="12"/>
        <end position="32"/>
    </location>
</feature>
<feature type="transmembrane region" description="Helical" evidence="1">
    <location>
        <begin position="67"/>
        <end position="87"/>
    </location>
</feature>
<feature type="transmembrane region" description="Helical" evidence="1">
    <location>
        <begin position="93"/>
        <end position="113"/>
    </location>
</feature>
<feature type="transmembrane region" description="Helical" evidence="1">
    <location>
        <begin position="137"/>
        <end position="157"/>
    </location>
</feature>
<feature type="active site" evidence="1">
    <location>
        <position position="123"/>
    </location>
</feature>
<feature type="active site" evidence="1">
    <location>
        <position position="141"/>
    </location>
</feature>
<name>LSPA_SHEB8</name>
<protein>
    <recommendedName>
        <fullName evidence="1">Lipoprotein signal peptidase</fullName>
        <ecNumber evidence="1">3.4.23.36</ecNumber>
    </recommendedName>
    <alternativeName>
        <fullName evidence="1">Prolipoprotein signal peptidase</fullName>
    </alternativeName>
    <alternativeName>
        <fullName evidence="1">Signal peptidase II</fullName>
        <shortName evidence="1">SPase II</shortName>
    </alternativeName>
</protein>
<sequence>MPLTWKDSGLRWYWVAVLVFFADQLSKQWVLANFDLHESLNLLPFFNFTYVRNYGAAFSFLSDAGGWQRWLFTIVAVGFSTLLTVWLRRQSASLLKLNLAYTLVIGGALGNLVDRLMHGFVVDFIDFFWAKSHYPAFNIADSAICIGAVLIIWDAFLSGKSETDSAEGVKK</sequence>
<evidence type="ECO:0000255" key="1">
    <source>
        <dbReference type="HAMAP-Rule" id="MF_00161"/>
    </source>
</evidence>
<gene>
    <name evidence="1" type="primary">lspA</name>
    <name type="ordered locus">Shew185_1122</name>
</gene>
<dbReference type="EC" id="3.4.23.36" evidence="1"/>
<dbReference type="EMBL" id="CP000753">
    <property type="protein sequence ID" value="ABS07274.1"/>
    <property type="molecule type" value="Genomic_DNA"/>
</dbReference>
<dbReference type="RefSeq" id="WP_011846081.1">
    <property type="nucleotide sequence ID" value="NC_009665.1"/>
</dbReference>
<dbReference type="SMR" id="A6WKD5"/>
<dbReference type="MEROPS" id="A08.001"/>
<dbReference type="KEGG" id="sbm:Shew185_1122"/>
<dbReference type="HOGENOM" id="CLU_083252_4_0_6"/>
<dbReference type="UniPathway" id="UPA00665"/>
<dbReference type="GO" id="GO:0005886">
    <property type="term" value="C:plasma membrane"/>
    <property type="evidence" value="ECO:0007669"/>
    <property type="project" value="UniProtKB-SubCell"/>
</dbReference>
<dbReference type="GO" id="GO:0004190">
    <property type="term" value="F:aspartic-type endopeptidase activity"/>
    <property type="evidence" value="ECO:0007669"/>
    <property type="project" value="UniProtKB-UniRule"/>
</dbReference>
<dbReference type="GO" id="GO:0006508">
    <property type="term" value="P:proteolysis"/>
    <property type="evidence" value="ECO:0007669"/>
    <property type="project" value="UniProtKB-KW"/>
</dbReference>
<dbReference type="HAMAP" id="MF_00161">
    <property type="entry name" value="LspA"/>
    <property type="match status" value="1"/>
</dbReference>
<dbReference type="InterPro" id="IPR001872">
    <property type="entry name" value="Peptidase_A8"/>
</dbReference>
<dbReference type="NCBIfam" id="TIGR00077">
    <property type="entry name" value="lspA"/>
    <property type="match status" value="1"/>
</dbReference>
<dbReference type="PANTHER" id="PTHR33695">
    <property type="entry name" value="LIPOPROTEIN SIGNAL PEPTIDASE"/>
    <property type="match status" value="1"/>
</dbReference>
<dbReference type="PANTHER" id="PTHR33695:SF1">
    <property type="entry name" value="LIPOPROTEIN SIGNAL PEPTIDASE"/>
    <property type="match status" value="1"/>
</dbReference>
<dbReference type="Pfam" id="PF01252">
    <property type="entry name" value="Peptidase_A8"/>
    <property type="match status" value="1"/>
</dbReference>
<dbReference type="PRINTS" id="PR00781">
    <property type="entry name" value="LIPOSIGPTASE"/>
</dbReference>
<dbReference type="PROSITE" id="PS00855">
    <property type="entry name" value="SPASE_II"/>
    <property type="match status" value="1"/>
</dbReference>
<organism>
    <name type="scientific">Shewanella baltica (strain OS185)</name>
    <dbReference type="NCBI Taxonomy" id="402882"/>
    <lineage>
        <taxon>Bacteria</taxon>
        <taxon>Pseudomonadati</taxon>
        <taxon>Pseudomonadota</taxon>
        <taxon>Gammaproteobacteria</taxon>
        <taxon>Alteromonadales</taxon>
        <taxon>Shewanellaceae</taxon>
        <taxon>Shewanella</taxon>
    </lineage>
</organism>
<reference key="1">
    <citation type="submission" date="2007-07" db="EMBL/GenBank/DDBJ databases">
        <title>Complete sequence of chromosome of Shewanella baltica OS185.</title>
        <authorList>
            <consortium name="US DOE Joint Genome Institute"/>
            <person name="Copeland A."/>
            <person name="Lucas S."/>
            <person name="Lapidus A."/>
            <person name="Barry K."/>
            <person name="Glavina del Rio T."/>
            <person name="Dalin E."/>
            <person name="Tice H."/>
            <person name="Pitluck S."/>
            <person name="Sims D."/>
            <person name="Brettin T."/>
            <person name="Bruce D."/>
            <person name="Detter J.C."/>
            <person name="Han C."/>
            <person name="Schmutz J."/>
            <person name="Larimer F."/>
            <person name="Land M."/>
            <person name="Hauser L."/>
            <person name="Kyrpides N."/>
            <person name="Mikhailova N."/>
            <person name="Brettar I."/>
            <person name="Rodrigues J."/>
            <person name="Konstantinidis K."/>
            <person name="Tiedje J."/>
            <person name="Richardson P."/>
        </authorList>
    </citation>
    <scope>NUCLEOTIDE SEQUENCE [LARGE SCALE GENOMIC DNA]</scope>
    <source>
        <strain>OS185</strain>
    </source>
</reference>